<sequence length="223" mass="23369">MNIAKLIDHTILKANSTKEDVMKVIEEAKEYKFASVCINPTWVKLAADELAGHDVDVCTVIGFPLGASTTETKAFETKDAIAKGATEVDMVINVGALKDGDNELVEKDIYEVVQAAKGKALVKVIIETCLLTDEEKVRACELSVKAGADFVKTSTGFSTGGATAEDIALMRKTVGPNVGVKASGGVRTREDADKMVAAGASRVGASASVAIVLNDAKGATDNY</sequence>
<accession>B7HIT0</accession>
<gene>
    <name evidence="1" type="primary">deoC</name>
    <name type="ordered locus">BCB4264_A1895</name>
</gene>
<organism>
    <name type="scientific">Bacillus cereus (strain B4264)</name>
    <dbReference type="NCBI Taxonomy" id="405532"/>
    <lineage>
        <taxon>Bacteria</taxon>
        <taxon>Bacillati</taxon>
        <taxon>Bacillota</taxon>
        <taxon>Bacilli</taxon>
        <taxon>Bacillales</taxon>
        <taxon>Bacillaceae</taxon>
        <taxon>Bacillus</taxon>
        <taxon>Bacillus cereus group</taxon>
    </lineage>
</organism>
<protein>
    <recommendedName>
        <fullName evidence="1">Deoxyribose-phosphate aldolase</fullName>
        <shortName evidence="1">DERA</shortName>
        <ecNumber evidence="1">4.1.2.4</ecNumber>
    </recommendedName>
    <alternativeName>
        <fullName evidence="1">2-deoxy-D-ribose 5-phosphate aldolase</fullName>
    </alternativeName>
    <alternativeName>
        <fullName evidence="1">Phosphodeoxyriboaldolase</fullName>
        <shortName evidence="1">Deoxyriboaldolase</shortName>
    </alternativeName>
</protein>
<proteinExistence type="inferred from homology"/>
<keyword id="KW-0963">Cytoplasm</keyword>
<keyword id="KW-0456">Lyase</keyword>
<keyword id="KW-0704">Schiff base</keyword>
<reference key="1">
    <citation type="submission" date="2008-10" db="EMBL/GenBank/DDBJ databases">
        <title>Genome sequence of Bacillus cereus B4264.</title>
        <authorList>
            <person name="Dodson R.J."/>
            <person name="Durkin A.S."/>
            <person name="Rosovitz M.J."/>
            <person name="Rasko D.A."/>
            <person name="Hoffmaster A."/>
            <person name="Ravel J."/>
            <person name="Sutton G."/>
        </authorList>
    </citation>
    <scope>NUCLEOTIDE SEQUENCE [LARGE SCALE GENOMIC DNA]</scope>
    <source>
        <strain>B4264</strain>
    </source>
</reference>
<feature type="chain" id="PRO_1000117541" description="Deoxyribose-phosphate aldolase">
    <location>
        <begin position="1"/>
        <end position="223"/>
    </location>
</feature>
<feature type="active site" description="Proton donor/acceptor" evidence="1">
    <location>
        <position position="89"/>
    </location>
</feature>
<feature type="active site" description="Schiff-base intermediate with acetaldehyde" evidence="1">
    <location>
        <position position="152"/>
    </location>
</feature>
<feature type="active site" description="Proton donor/acceptor" evidence="1">
    <location>
        <position position="181"/>
    </location>
</feature>
<evidence type="ECO:0000255" key="1">
    <source>
        <dbReference type="HAMAP-Rule" id="MF_00114"/>
    </source>
</evidence>
<name>DEOC_BACC4</name>
<comment type="function">
    <text evidence="1">Catalyzes a reversible aldol reaction between acetaldehyde and D-glyceraldehyde 3-phosphate to generate 2-deoxy-D-ribose 5-phosphate.</text>
</comment>
<comment type="catalytic activity">
    <reaction evidence="1">
        <text>2-deoxy-D-ribose 5-phosphate = D-glyceraldehyde 3-phosphate + acetaldehyde</text>
        <dbReference type="Rhea" id="RHEA:12821"/>
        <dbReference type="ChEBI" id="CHEBI:15343"/>
        <dbReference type="ChEBI" id="CHEBI:59776"/>
        <dbReference type="ChEBI" id="CHEBI:62877"/>
        <dbReference type="EC" id="4.1.2.4"/>
    </reaction>
</comment>
<comment type="pathway">
    <text evidence="1">Carbohydrate degradation; 2-deoxy-D-ribose 1-phosphate degradation; D-glyceraldehyde 3-phosphate and acetaldehyde from 2-deoxy-alpha-D-ribose 1-phosphate: step 2/2.</text>
</comment>
<comment type="subcellular location">
    <subcellularLocation>
        <location evidence="1">Cytoplasm</location>
    </subcellularLocation>
</comment>
<comment type="similarity">
    <text evidence="1">Belongs to the DeoC/FbaB aldolase family. DeoC type 1 subfamily.</text>
</comment>
<dbReference type="EC" id="4.1.2.4" evidence="1"/>
<dbReference type="EMBL" id="CP001176">
    <property type="protein sequence ID" value="ACK60866.1"/>
    <property type="molecule type" value="Genomic_DNA"/>
</dbReference>
<dbReference type="RefSeq" id="WP_001017433.1">
    <property type="nucleotide sequence ID" value="NZ_VEHB01000001.1"/>
</dbReference>
<dbReference type="SMR" id="B7HIT0"/>
<dbReference type="GeneID" id="87594673"/>
<dbReference type="KEGG" id="bcb:BCB4264_A1895"/>
<dbReference type="HOGENOM" id="CLU_053595_0_1_9"/>
<dbReference type="UniPathway" id="UPA00002">
    <property type="reaction ID" value="UER00468"/>
</dbReference>
<dbReference type="Proteomes" id="UP000007096">
    <property type="component" value="Chromosome"/>
</dbReference>
<dbReference type="GO" id="GO:0005737">
    <property type="term" value="C:cytoplasm"/>
    <property type="evidence" value="ECO:0007669"/>
    <property type="project" value="UniProtKB-SubCell"/>
</dbReference>
<dbReference type="GO" id="GO:0004139">
    <property type="term" value="F:deoxyribose-phosphate aldolase activity"/>
    <property type="evidence" value="ECO:0007669"/>
    <property type="project" value="UniProtKB-UniRule"/>
</dbReference>
<dbReference type="GO" id="GO:0006018">
    <property type="term" value="P:2-deoxyribose 1-phosphate catabolic process"/>
    <property type="evidence" value="ECO:0007669"/>
    <property type="project" value="UniProtKB-UniRule"/>
</dbReference>
<dbReference type="GO" id="GO:0016052">
    <property type="term" value="P:carbohydrate catabolic process"/>
    <property type="evidence" value="ECO:0007669"/>
    <property type="project" value="TreeGrafter"/>
</dbReference>
<dbReference type="GO" id="GO:0009264">
    <property type="term" value="P:deoxyribonucleotide catabolic process"/>
    <property type="evidence" value="ECO:0007669"/>
    <property type="project" value="InterPro"/>
</dbReference>
<dbReference type="CDD" id="cd00959">
    <property type="entry name" value="DeoC"/>
    <property type="match status" value="1"/>
</dbReference>
<dbReference type="FunFam" id="3.20.20.70:FF:000044">
    <property type="entry name" value="Deoxyribose-phosphate aldolase"/>
    <property type="match status" value="1"/>
</dbReference>
<dbReference type="Gene3D" id="3.20.20.70">
    <property type="entry name" value="Aldolase class I"/>
    <property type="match status" value="1"/>
</dbReference>
<dbReference type="HAMAP" id="MF_00114">
    <property type="entry name" value="DeoC_type1"/>
    <property type="match status" value="1"/>
</dbReference>
<dbReference type="InterPro" id="IPR013785">
    <property type="entry name" value="Aldolase_TIM"/>
</dbReference>
<dbReference type="InterPro" id="IPR011343">
    <property type="entry name" value="DeoC"/>
</dbReference>
<dbReference type="InterPro" id="IPR002915">
    <property type="entry name" value="DeoC/FbaB/LacD_aldolase"/>
</dbReference>
<dbReference type="InterPro" id="IPR028581">
    <property type="entry name" value="DeoC_typeI"/>
</dbReference>
<dbReference type="NCBIfam" id="TIGR00126">
    <property type="entry name" value="deoC"/>
    <property type="match status" value="1"/>
</dbReference>
<dbReference type="PANTHER" id="PTHR10889">
    <property type="entry name" value="DEOXYRIBOSE-PHOSPHATE ALDOLASE"/>
    <property type="match status" value="1"/>
</dbReference>
<dbReference type="PANTHER" id="PTHR10889:SF1">
    <property type="entry name" value="DEOXYRIBOSE-PHOSPHATE ALDOLASE"/>
    <property type="match status" value="1"/>
</dbReference>
<dbReference type="Pfam" id="PF01791">
    <property type="entry name" value="DeoC"/>
    <property type="match status" value="1"/>
</dbReference>
<dbReference type="PIRSF" id="PIRSF001357">
    <property type="entry name" value="DeoC"/>
    <property type="match status" value="1"/>
</dbReference>
<dbReference type="SMART" id="SM01133">
    <property type="entry name" value="DeoC"/>
    <property type="match status" value="1"/>
</dbReference>
<dbReference type="SUPFAM" id="SSF51569">
    <property type="entry name" value="Aldolase"/>
    <property type="match status" value="1"/>
</dbReference>